<protein>
    <recommendedName>
        <fullName evidence="1">ATP-dependent Clp protease proteolytic subunit</fullName>
        <ecNumber evidence="1">3.4.21.92</ecNumber>
    </recommendedName>
    <alternativeName>
        <fullName evidence="1">Endopeptidase Clp</fullName>
    </alternativeName>
</protein>
<gene>
    <name evidence="1" type="primary">clpP</name>
    <name type="ordered locus">PFL_3987</name>
</gene>
<reference key="1">
    <citation type="journal article" date="2005" name="Nat. Biotechnol.">
        <title>Complete genome sequence of the plant commensal Pseudomonas fluorescens Pf-5.</title>
        <authorList>
            <person name="Paulsen I.T."/>
            <person name="Press C.M."/>
            <person name="Ravel J."/>
            <person name="Kobayashi D.Y."/>
            <person name="Myers G.S.A."/>
            <person name="Mavrodi D.V."/>
            <person name="DeBoy R.T."/>
            <person name="Seshadri R."/>
            <person name="Ren Q."/>
            <person name="Madupu R."/>
            <person name="Dodson R.J."/>
            <person name="Durkin A.S."/>
            <person name="Brinkac L.M."/>
            <person name="Daugherty S.C."/>
            <person name="Sullivan S.A."/>
            <person name="Rosovitz M.J."/>
            <person name="Gwinn M.L."/>
            <person name="Zhou L."/>
            <person name="Schneider D.J."/>
            <person name="Cartinhour S.W."/>
            <person name="Nelson W.C."/>
            <person name="Weidman J."/>
            <person name="Watkins K."/>
            <person name="Tran K."/>
            <person name="Khouri H."/>
            <person name="Pierson E.A."/>
            <person name="Pierson L.S. III"/>
            <person name="Thomashow L.S."/>
            <person name="Loper J.E."/>
        </authorList>
    </citation>
    <scope>NUCLEOTIDE SEQUENCE [LARGE SCALE GENOMIC DNA]</scope>
    <source>
        <strain>ATCC BAA-477 / NRRL B-23932 / Pf-5</strain>
    </source>
</reference>
<sequence length="211" mass="23478">MFRNSYIQQNSDIQAAGGLVPMVVEQSARGERAYDIYSRLLKERVIFLVGPVEDYMANLICAQLLFLEAENPDKDIHLYINSPGGSVTAGMSIYDTMQFIKPNVSTTCIGQACSMGAFLLTAGAPGKRFCLPNSRVMIHQPLGGFQGQASDIEIHAKEILFIRERLNTLMAKHSGRTLEEIERDTNRDNFMSAEAAREYGLIDEVINQRPA</sequence>
<feature type="chain" id="PRO_0000226459" description="ATP-dependent Clp protease proteolytic subunit">
    <location>
        <begin position="1"/>
        <end position="211"/>
    </location>
</feature>
<feature type="active site" description="Nucleophile" evidence="1">
    <location>
        <position position="114"/>
    </location>
</feature>
<feature type="active site" evidence="1">
    <location>
        <position position="139"/>
    </location>
</feature>
<accession>Q4K9J6</accession>
<proteinExistence type="inferred from homology"/>
<evidence type="ECO:0000255" key="1">
    <source>
        <dbReference type="HAMAP-Rule" id="MF_00444"/>
    </source>
</evidence>
<organism>
    <name type="scientific">Pseudomonas fluorescens (strain ATCC BAA-477 / NRRL B-23932 / Pf-5)</name>
    <dbReference type="NCBI Taxonomy" id="220664"/>
    <lineage>
        <taxon>Bacteria</taxon>
        <taxon>Pseudomonadati</taxon>
        <taxon>Pseudomonadota</taxon>
        <taxon>Gammaproteobacteria</taxon>
        <taxon>Pseudomonadales</taxon>
        <taxon>Pseudomonadaceae</taxon>
        <taxon>Pseudomonas</taxon>
    </lineage>
</organism>
<name>CLPP_PSEF5</name>
<keyword id="KW-0963">Cytoplasm</keyword>
<keyword id="KW-0378">Hydrolase</keyword>
<keyword id="KW-0645">Protease</keyword>
<keyword id="KW-0720">Serine protease</keyword>
<comment type="function">
    <text evidence="1">Cleaves peptides in various proteins in a process that requires ATP hydrolysis. Has a chymotrypsin-like activity. Plays a major role in the degradation of misfolded proteins.</text>
</comment>
<comment type="catalytic activity">
    <reaction evidence="1">
        <text>Hydrolysis of proteins to small peptides in the presence of ATP and magnesium. alpha-casein is the usual test substrate. In the absence of ATP, only oligopeptides shorter than five residues are hydrolyzed (such as succinyl-Leu-Tyr-|-NHMec, and Leu-Tyr-Leu-|-Tyr-Trp, in which cleavage of the -Tyr-|-Leu- and -Tyr-|-Trp bonds also occurs).</text>
        <dbReference type="EC" id="3.4.21.92"/>
    </reaction>
</comment>
<comment type="subunit">
    <text evidence="1">Fourteen ClpP subunits assemble into 2 heptameric rings which stack back to back to give a disk-like structure with a central cavity, resembling the structure of eukaryotic proteasomes.</text>
</comment>
<comment type="subcellular location">
    <subcellularLocation>
        <location evidence="1">Cytoplasm</location>
    </subcellularLocation>
</comment>
<comment type="similarity">
    <text evidence="1">Belongs to the peptidase S14 family.</text>
</comment>
<dbReference type="EC" id="3.4.21.92" evidence="1"/>
<dbReference type="EMBL" id="CP000076">
    <property type="protein sequence ID" value="AAY93251.1"/>
    <property type="molecule type" value="Genomic_DNA"/>
</dbReference>
<dbReference type="RefSeq" id="WP_011062274.1">
    <property type="nucleotide sequence ID" value="NC_004129.6"/>
</dbReference>
<dbReference type="SMR" id="Q4K9J6"/>
<dbReference type="STRING" id="220664.PFL_3987"/>
<dbReference type="MEROPS" id="S14.001"/>
<dbReference type="GeneID" id="57477055"/>
<dbReference type="KEGG" id="pfl:PFL_3987"/>
<dbReference type="PATRIC" id="fig|220664.5.peg.4085"/>
<dbReference type="eggNOG" id="COG0740">
    <property type="taxonomic scope" value="Bacteria"/>
</dbReference>
<dbReference type="HOGENOM" id="CLU_058707_3_3_6"/>
<dbReference type="Proteomes" id="UP000008540">
    <property type="component" value="Chromosome"/>
</dbReference>
<dbReference type="GO" id="GO:0005737">
    <property type="term" value="C:cytoplasm"/>
    <property type="evidence" value="ECO:0007669"/>
    <property type="project" value="UniProtKB-SubCell"/>
</dbReference>
<dbReference type="GO" id="GO:0009368">
    <property type="term" value="C:endopeptidase Clp complex"/>
    <property type="evidence" value="ECO:0007669"/>
    <property type="project" value="TreeGrafter"/>
</dbReference>
<dbReference type="GO" id="GO:0004176">
    <property type="term" value="F:ATP-dependent peptidase activity"/>
    <property type="evidence" value="ECO:0007669"/>
    <property type="project" value="InterPro"/>
</dbReference>
<dbReference type="GO" id="GO:0051117">
    <property type="term" value="F:ATPase binding"/>
    <property type="evidence" value="ECO:0007669"/>
    <property type="project" value="TreeGrafter"/>
</dbReference>
<dbReference type="GO" id="GO:0004252">
    <property type="term" value="F:serine-type endopeptidase activity"/>
    <property type="evidence" value="ECO:0007669"/>
    <property type="project" value="UniProtKB-UniRule"/>
</dbReference>
<dbReference type="GO" id="GO:0006515">
    <property type="term" value="P:protein quality control for misfolded or incompletely synthesized proteins"/>
    <property type="evidence" value="ECO:0007669"/>
    <property type="project" value="TreeGrafter"/>
</dbReference>
<dbReference type="CDD" id="cd07017">
    <property type="entry name" value="S14_ClpP_2"/>
    <property type="match status" value="1"/>
</dbReference>
<dbReference type="FunFam" id="3.90.226.10:FF:000001">
    <property type="entry name" value="ATP-dependent Clp protease proteolytic subunit"/>
    <property type="match status" value="1"/>
</dbReference>
<dbReference type="Gene3D" id="3.90.226.10">
    <property type="entry name" value="2-enoyl-CoA Hydratase, Chain A, domain 1"/>
    <property type="match status" value="1"/>
</dbReference>
<dbReference type="HAMAP" id="MF_00444">
    <property type="entry name" value="ClpP"/>
    <property type="match status" value="1"/>
</dbReference>
<dbReference type="InterPro" id="IPR001907">
    <property type="entry name" value="ClpP"/>
</dbReference>
<dbReference type="InterPro" id="IPR029045">
    <property type="entry name" value="ClpP/crotonase-like_dom_sf"/>
</dbReference>
<dbReference type="InterPro" id="IPR023562">
    <property type="entry name" value="ClpP/TepA"/>
</dbReference>
<dbReference type="InterPro" id="IPR033135">
    <property type="entry name" value="ClpP_His_AS"/>
</dbReference>
<dbReference type="InterPro" id="IPR018215">
    <property type="entry name" value="ClpP_Ser_AS"/>
</dbReference>
<dbReference type="NCBIfam" id="TIGR00493">
    <property type="entry name" value="clpP"/>
    <property type="match status" value="1"/>
</dbReference>
<dbReference type="NCBIfam" id="NF001368">
    <property type="entry name" value="PRK00277.1"/>
    <property type="match status" value="1"/>
</dbReference>
<dbReference type="NCBIfam" id="NF009205">
    <property type="entry name" value="PRK12553.1"/>
    <property type="match status" value="1"/>
</dbReference>
<dbReference type="PANTHER" id="PTHR10381">
    <property type="entry name" value="ATP-DEPENDENT CLP PROTEASE PROTEOLYTIC SUBUNIT"/>
    <property type="match status" value="1"/>
</dbReference>
<dbReference type="PANTHER" id="PTHR10381:SF70">
    <property type="entry name" value="ATP-DEPENDENT CLP PROTEASE PROTEOLYTIC SUBUNIT"/>
    <property type="match status" value="1"/>
</dbReference>
<dbReference type="Pfam" id="PF00574">
    <property type="entry name" value="CLP_protease"/>
    <property type="match status" value="1"/>
</dbReference>
<dbReference type="PRINTS" id="PR00127">
    <property type="entry name" value="CLPPROTEASEP"/>
</dbReference>
<dbReference type="SUPFAM" id="SSF52096">
    <property type="entry name" value="ClpP/crotonase"/>
    <property type="match status" value="1"/>
</dbReference>
<dbReference type="PROSITE" id="PS00382">
    <property type="entry name" value="CLP_PROTEASE_HIS"/>
    <property type="match status" value="1"/>
</dbReference>
<dbReference type="PROSITE" id="PS00381">
    <property type="entry name" value="CLP_PROTEASE_SER"/>
    <property type="match status" value="1"/>
</dbReference>